<protein>
    <recommendedName>
        <fullName>CRISPR-associated protein Csy2</fullName>
    </recommendedName>
</protein>
<keyword id="KW-0002">3D-structure</keyword>
<keyword id="KW-0051">Antiviral defense</keyword>
<name>CSY2_PSEAB</name>
<evidence type="ECO:0000269" key="1">
    <source>
    </source>
</evidence>
<evidence type="ECO:0000269" key="2">
    <source>
    </source>
</evidence>
<evidence type="ECO:0000269" key="3">
    <source>
    </source>
</evidence>
<evidence type="ECO:0000269" key="4">
    <source>
    </source>
</evidence>
<evidence type="ECO:0000305" key="5"/>
<evidence type="ECO:0007829" key="6">
    <source>
        <dbReference type="PDB" id="6B44"/>
    </source>
</evidence>
<evidence type="ECO:0007829" key="7">
    <source>
        <dbReference type="PDB" id="6NE0"/>
    </source>
</evidence>
<evidence type="ECO:0007829" key="8">
    <source>
        <dbReference type="PDB" id="6VQV"/>
    </source>
</evidence>
<evidence type="ECO:0007829" key="9">
    <source>
        <dbReference type="PDB" id="7ELM"/>
    </source>
</evidence>
<evidence type="ECO:0007829" key="10">
    <source>
        <dbReference type="PDB" id="7TAW"/>
    </source>
</evidence>
<accession>Q02MM0</accession>
<sequence>MSVTDPEALLLLPRLSIQNANAISSPLTWGFPSPGAFTGFVHALQRRVGISLDIELDGVGIVCHRFEAQISQPAGKRTKVFNLTRNPLNRDGSTAAIVEEGRAHLEVSLLLGVHGDGLDDHPAQEIARQVQEQAGAMRLAGGSILPWCNERFPAPNAELLMLGGSDEQRRKNQRRLTRRLLPGFALVSREALLQQHLETLRTTLPEATTLDALLDLCRINFEPPATSSEEEASPPDAAWQVRDKPGWLVPIPAGYNALSPLYLPGEVRNARDRETPLRFVENLFGLGEWLSPHRVAALSDLLWYHHAEPDKGLYRWSTPRFVEHAIA</sequence>
<dbReference type="EMBL" id="CP000438">
    <property type="protein sequence ID" value="ABJ11603.1"/>
    <property type="molecule type" value="Genomic_DNA"/>
</dbReference>
<dbReference type="RefSeq" id="WP_003116910.1">
    <property type="nucleotide sequence ID" value="NZ_CP034244.1"/>
</dbReference>
<dbReference type="PDB" id="5UZ9">
    <property type="method" value="EM"/>
    <property type="resolution" value="3.40 A"/>
    <property type="chains" value="B=1-327"/>
</dbReference>
<dbReference type="PDB" id="6B44">
    <property type="method" value="EM"/>
    <property type="resolution" value="2.90 A"/>
    <property type="chains" value="B=1-327"/>
</dbReference>
<dbReference type="PDB" id="6B45">
    <property type="method" value="EM"/>
    <property type="resolution" value="3.50 A"/>
    <property type="chains" value="B=1-327"/>
</dbReference>
<dbReference type="PDB" id="6B47">
    <property type="method" value="EM"/>
    <property type="resolution" value="3.20 A"/>
    <property type="chains" value="B=1-327"/>
</dbReference>
<dbReference type="PDB" id="6B48">
    <property type="method" value="EM"/>
    <property type="resolution" value="3.60 A"/>
    <property type="chains" value="B=1-327"/>
</dbReference>
<dbReference type="PDB" id="6NE0">
    <property type="method" value="EM"/>
    <property type="resolution" value="3.40 A"/>
    <property type="chains" value="B=1-327"/>
</dbReference>
<dbReference type="PDB" id="6VQV">
    <property type="method" value="EM"/>
    <property type="resolution" value="2.57 A"/>
    <property type="chains" value="D=1-327"/>
</dbReference>
<dbReference type="PDB" id="6VQW">
    <property type="method" value="EM"/>
    <property type="resolution" value="3.42 A"/>
    <property type="chains" value="C=1-327"/>
</dbReference>
<dbReference type="PDB" id="6VQX">
    <property type="method" value="EM"/>
    <property type="resolution" value="3.15 A"/>
    <property type="chains" value="C=1-327"/>
</dbReference>
<dbReference type="PDB" id="6W1X">
    <property type="method" value="EM"/>
    <property type="resolution" value="3.90 A"/>
    <property type="chains" value="B=1-327"/>
</dbReference>
<dbReference type="PDB" id="6WHI">
    <property type="method" value="EM"/>
    <property type="resolution" value="4.20 A"/>
    <property type="chains" value="B=1-327"/>
</dbReference>
<dbReference type="PDB" id="7ECV">
    <property type="method" value="EM"/>
    <property type="resolution" value="3.43 A"/>
    <property type="chains" value="B=1-327"/>
</dbReference>
<dbReference type="PDB" id="7ECW">
    <property type="method" value="EM"/>
    <property type="resolution" value="3.10 A"/>
    <property type="chains" value="B=1-327"/>
</dbReference>
<dbReference type="PDB" id="7ELM">
    <property type="method" value="EM"/>
    <property type="resolution" value="2.88 A"/>
    <property type="chains" value="B/L=1-327"/>
</dbReference>
<dbReference type="PDB" id="7ELN">
    <property type="method" value="EM"/>
    <property type="resolution" value="3.00 A"/>
    <property type="chains" value="B/L=1-327"/>
</dbReference>
<dbReference type="PDB" id="7EQG">
    <property type="method" value="EM"/>
    <property type="resolution" value="3.20 A"/>
    <property type="chains" value="C=1-327"/>
</dbReference>
<dbReference type="PDB" id="7JZW">
    <property type="method" value="EM"/>
    <property type="resolution" value="3.20 A"/>
    <property type="chains" value="B=1-327"/>
</dbReference>
<dbReference type="PDB" id="7JZX">
    <property type="method" value="EM"/>
    <property type="resolution" value="3.40 A"/>
    <property type="chains" value="B=1-327"/>
</dbReference>
<dbReference type="PDB" id="7JZY">
    <property type="method" value="EM"/>
    <property type="resolution" value="3.60 A"/>
    <property type="chains" value="B=1-327"/>
</dbReference>
<dbReference type="PDB" id="7JZZ">
    <property type="method" value="EM"/>
    <property type="resolution" value="3.20 A"/>
    <property type="chains" value="B=1-327"/>
</dbReference>
<dbReference type="PDB" id="7T3J">
    <property type="method" value="EM"/>
    <property type="resolution" value="3.20 A"/>
    <property type="chains" value="B=1-327"/>
</dbReference>
<dbReference type="PDB" id="7T3K">
    <property type="method" value="EM"/>
    <property type="resolution" value="3.50 A"/>
    <property type="chains" value="B/b=1-327"/>
</dbReference>
<dbReference type="PDB" id="7T3L">
    <property type="method" value="EM"/>
    <property type="resolution" value="3.60 A"/>
    <property type="chains" value="B/b=1-327"/>
</dbReference>
<dbReference type="PDB" id="7TAW">
    <property type="method" value="EM"/>
    <property type="resolution" value="2.70 A"/>
    <property type="chains" value="B/b=1-327"/>
</dbReference>
<dbReference type="PDB" id="7TAX">
    <property type="method" value="EM"/>
    <property type="resolution" value="2.80 A"/>
    <property type="chains" value="B=1-327"/>
</dbReference>
<dbReference type="PDB" id="7WE6">
    <property type="method" value="EM"/>
    <property type="resolution" value="3.20 A"/>
    <property type="chains" value="B/L=1-327"/>
</dbReference>
<dbReference type="PDBsum" id="5UZ9"/>
<dbReference type="PDBsum" id="6B44"/>
<dbReference type="PDBsum" id="6B45"/>
<dbReference type="PDBsum" id="6B47"/>
<dbReference type="PDBsum" id="6B48"/>
<dbReference type="PDBsum" id="6NE0"/>
<dbReference type="PDBsum" id="6VQV"/>
<dbReference type="PDBsum" id="6VQW"/>
<dbReference type="PDBsum" id="6VQX"/>
<dbReference type="PDBsum" id="6W1X"/>
<dbReference type="PDBsum" id="6WHI"/>
<dbReference type="PDBsum" id="7ECV"/>
<dbReference type="PDBsum" id="7ECW"/>
<dbReference type="PDBsum" id="7ELM"/>
<dbReference type="PDBsum" id="7ELN"/>
<dbReference type="PDBsum" id="7EQG"/>
<dbReference type="PDBsum" id="7JZW"/>
<dbReference type="PDBsum" id="7JZX"/>
<dbReference type="PDBsum" id="7JZY"/>
<dbReference type="PDBsum" id="7JZZ"/>
<dbReference type="PDBsum" id="7T3J"/>
<dbReference type="PDBsum" id="7T3K"/>
<dbReference type="PDBsum" id="7T3L"/>
<dbReference type="PDBsum" id="7TAW"/>
<dbReference type="PDBsum" id="7TAX"/>
<dbReference type="PDBsum" id="7WE6"/>
<dbReference type="EMDB" id="EMD-21517"/>
<dbReference type="EMDB" id="EMD-7048"/>
<dbReference type="EMDB" id="EMD-7049"/>
<dbReference type="EMDB" id="EMD-7051"/>
<dbReference type="EMDB" id="EMD-7052"/>
<dbReference type="EMDB" id="EMD-8624"/>
<dbReference type="EMDB" id="EMD-9191"/>
<dbReference type="SMR" id="Q02MM0"/>
<dbReference type="DIP" id="DIP-59679N"/>
<dbReference type="IntAct" id="Q02MM0">
    <property type="interactions" value="4"/>
</dbReference>
<dbReference type="KEGG" id="pau:PA14_33320"/>
<dbReference type="PseudoCAP" id="PA14_33320"/>
<dbReference type="HOGENOM" id="CLU_073578_0_0_6"/>
<dbReference type="BioCyc" id="PAER208963:G1G74-2804-MONOMER"/>
<dbReference type="Proteomes" id="UP000000653">
    <property type="component" value="Chromosome"/>
</dbReference>
<dbReference type="GO" id="GO:0051607">
    <property type="term" value="P:defense response to virus"/>
    <property type="evidence" value="ECO:0007669"/>
    <property type="project" value="UniProtKB-KW"/>
</dbReference>
<dbReference type="CDD" id="cd09736">
    <property type="entry name" value="Csy2_I-F"/>
    <property type="match status" value="1"/>
</dbReference>
<dbReference type="InterPro" id="IPR013398">
    <property type="entry name" value="CRISPR-assoc_prot_Csy2"/>
</dbReference>
<dbReference type="NCBIfam" id="TIGR02565">
    <property type="entry name" value="cas_Csy2"/>
    <property type="match status" value="1"/>
</dbReference>
<dbReference type="Pfam" id="PF09614">
    <property type="entry name" value="Cas_Csy2"/>
    <property type="match status" value="1"/>
</dbReference>
<reference key="1">
    <citation type="journal article" date="2006" name="Genome Biol.">
        <title>Genomic analysis reveals that Pseudomonas aeruginosa virulence is combinatorial.</title>
        <authorList>
            <person name="Lee D.G."/>
            <person name="Urbach J.M."/>
            <person name="Wu G."/>
            <person name="Liberati N.T."/>
            <person name="Feinbaum R.L."/>
            <person name="Miyata S."/>
            <person name="Diggins L.T."/>
            <person name="He J."/>
            <person name="Saucier M."/>
            <person name="Deziel E."/>
            <person name="Friedman L."/>
            <person name="Li L."/>
            <person name="Grills G."/>
            <person name="Montgomery K."/>
            <person name="Kucherlapati R."/>
            <person name="Rahme L.G."/>
            <person name="Ausubel F.M."/>
        </authorList>
    </citation>
    <scope>NUCLEOTIDE SEQUENCE [LARGE SCALE GENOMIC DNA]</scope>
    <source>
        <strain>UCBPP-PA14</strain>
    </source>
</reference>
<reference key="2">
    <citation type="journal article" date="2011" name="J. Bacteriol.">
        <title>Non-identity-mediated CRISPR-bacteriophage interaction mediated via the Csy and Cas3 proteins.</title>
        <authorList>
            <person name="Cady K.C."/>
            <person name="O'Toole G.A."/>
        </authorList>
    </citation>
    <scope>FUNCTION IN CRRNA FORMATION</scope>
    <scope>FUNCTION IN INHIBITION OF BIOFILM FORMATION</scope>
    <scope>DISRUPTION PHENOTYPE</scope>
    <source>
        <strain>UCBPP-PA14</strain>
    </source>
</reference>
<reference key="3">
    <citation type="journal article" date="2011" name="Microbiology">
        <title>Prevalence, conservation and functional analysis of Yersinia and Escherichia CRISPR regions in clinical Pseudomonas aeruginosa isolates.</title>
        <authorList>
            <person name="Cady K.C."/>
            <person name="White A.S."/>
            <person name="Hammond J.H."/>
            <person name="Abendroth M.D."/>
            <person name="Karthikeyan R.S."/>
            <person name="Lalitha P."/>
            <person name="Zegans M.E."/>
            <person name="O'Toole G.A."/>
        </authorList>
    </citation>
    <scope>NO ROLE IN PHAGE PROTECTION</scope>
    <scope>DISRUPTION PHENOTYPE</scope>
    <source>
        <strain>UCBPP-PA14</strain>
    </source>
</reference>
<reference key="4">
    <citation type="journal article" date="2011" name="Proc. Natl. Acad. Sci. U.S.A.">
        <title>RNA-guided complex from a bacterial immune system enhances target recognition through seed sequence interactions.</title>
        <authorList>
            <person name="Wiedenheft B."/>
            <person name="van Duijn E."/>
            <person name="Bultema J.B."/>
            <person name="Waghmare S.P."/>
            <person name="Zhou K."/>
            <person name="Barendregt A."/>
            <person name="Westphal W."/>
            <person name="Heck A.J."/>
            <person name="Boekema E.J."/>
            <person name="Dickman M.J."/>
            <person name="Doudna J.A."/>
        </authorList>
    </citation>
    <scope>INTERACTION WITH CSY1</scope>
    <scope>SUBUNIT</scope>
    <scope>MASS SPECTROMETRY</scope>
    <source>
        <strain>UCBPP-PA14</strain>
    </source>
</reference>
<reference key="5">
    <citation type="journal article" date="2012" name="EMBO J.">
        <title>Csy4 relies on an unusual catalytic dyad to position and cleave CRISPR RNA.</title>
        <authorList>
            <person name="Haurwitz R.E."/>
            <person name="Sternberg S.H."/>
            <person name="Doudna J.A."/>
        </authorList>
    </citation>
    <scope>FUNCTION IN CRRNA FORMATION</scope>
    <scope>SUBUNIT</scope>
    <source>
        <strain>UCBPP-PA14</strain>
    </source>
</reference>
<gene>
    <name type="primary">csy2</name>
    <name type="ordered locus">PA14_33320</name>
</gene>
<feature type="chain" id="PRO_0000417877" description="CRISPR-associated protein Csy2">
    <location>
        <begin position="1"/>
        <end position="327"/>
    </location>
</feature>
<feature type="strand" evidence="8">
    <location>
        <begin position="7"/>
        <end position="21"/>
    </location>
</feature>
<feature type="strand" evidence="8">
    <location>
        <begin position="25"/>
        <end position="31"/>
    </location>
</feature>
<feature type="helix" evidence="8">
    <location>
        <begin position="34"/>
        <end position="45"/>
    </location>
</feature>
<feature type="turn" evidence="8">
    <location>
        <begin position="49"/>
        <end position="53"/>
    </location>
</feature>
<feature type="strand" evidence="8">
    <location>
        <begin position="56"/>
        <end position="68"/>
    </location>
</feature>
<feature type="strand" evidence="8">
    <location>
        <begin position="77"/>
        <end position="81"/>
    </location>
</feature>
<feature type="strand" evidence="9">
    <location>
        <begin position="90"/>
        <end position="93"/>
    </location>
</feature>
<feature type="strand" evidence="8">
    <location>
        <begin position="102"/>
        <end position="113"/>
    </location>
</feature>
<feature type="helix" evidence="8">
    <location>
        <begin position="116"/>
        <end position="118"/>
    </location>
</feature>
<feature type="strand" evidence="7">
    <location>
        <begin position="119"/>
        <end position="121"/>
    </location>
</feature>
<feature type="helix" evidence="8">
    <location>
        <begin position="123"/>
        <end position="131"/>
    </location>
</feature>
<feature type="turn" evidence="8">
    <location>
        <begin position="132"/>
        <end position="135"/>
    </location>
</feature>
<feature type="strand" evidence="8">
    <location>
        <begin position="136"/>
        <end position="145"/>
    </location>
</feature>
<feature type="strand" evidence="8">
    <location>
        <begin position="149"/>
        <end position="151"/>
    </location>
</feature>
<feature type="strand" evidence="10">
    <location>
        <begin position="157"/>
        <end position="162"/>
    </location>
</feature>
<feature type="turn" evidence="8">
    <location>
        <begin position="166"/>
        <end position="171"/>
    </location>
</feature>
<feature type="turn" evidence="8">
    <location>
        <begin position="173"/>
        <end position="175"/>
    </location>
</feature>
<feature type="helix" evidence="8">
    <location>
        <begin position="177"/>
        <end position="179"/>
    </location>
</feature>
<feature type="turn" evidence="8">
    <location>
        <begin position="180"/>
        <end position="182"/>
    </location>
</feature>
<feature type="strand" evidence="8">
    <location>
        <begin position="183"/>
        <end position="188"/>
    </location>
</feature>
<feature type="helix" evidence="8">
    <location>
        <begin position="190"/>
        <end position="195"/>
    </location>
</feature>
<feature type="turn" evidence="8">
    <location>
        <begin position="196"/>
        <end position="199"/>
    </location>
</feature>
<feature type="turn" evidence="9">
    <location>
        <begin position="201"/>
        <end position="203"/>
    </location>
</feature>
<feature type="strand" evidence="10">
    <location>
        <begin position="204"/>
        <end position="206"/>
    </location>
</feature>
<feature type="helix" evidence="8">
    <location>
        <begin position="207"/>
        <end position="211"/>
    </location>
</feature>
<feature type="turn" evidence="8">
    <location>
        <begin position="212"/>
        <end position="214"/>
    </location>
</feature>
<feature type="strand" evidence="6">
    <location>
        <begin position="215"/>
        <end position="219"/>
    </location>
</feature>
<feature type="strand" evidence="10">
    <location>
        <begin position="220"/>
        <end position="222"/>
    </location>
</feature>
<feature type="strand" evidence="9">
    <location>
        <begin position="240"/>
        <end position="242"/>
    </location>
</feature>
<feature type="strand" evidence="8">
    <location>
        <begin position="246"/>
        <end position="259"/>
    </location>
</feature>
<feature type="turn" evidence="10">
    <location>
        <begin position="264"/>
        <end position="266"/>
    </location>
</feature>
<feature type="strand" evidence="6">
    <location>
        <begin position="267"/>
        <end position="269"/>
    </location>
</feature>
<feature type="strand" evidence="10">
    <location>
        <begin position="273"/>
        <end position="275"/>
    </location>
</feature>
<feature type="strand" evidence="8">
    <location>
        <begin position="277"/>
        <end position="290"/>
    </location>
</feature>
<feature type="helix" evidence="10">
    <location>
        <begin position="292"/>
        <end position="294"/>
    </location>
</feature>
<feature type="helix" evidence="8">
    <location>
        <begin position="298"/>
        <end position="301"/>
    </location>
</feature>
<feature type="strand" evidence="8">
    <location>
        <begin position="303"/>
        <end position="308"/>
    </location>
</feature>
<feature type="turn" evidence="8">
    <location>
        <begin position="309"/>
        <end position="312"/>
    </location>
</feature>
<feature type="strand" evidence="8">
    <location>
        <begin position="313"/>
        <end position="317"/>
    </location>
</feature>
<comment type="function">
    <text evidence="2 4 5">CRISPR (clustered regularly interspaced short palindromic repeat) is an adaptive immune system that provides protection against mobile genetic elements (viruses, transposable elements and conjugative plasmids). CRISPR clusters contain sequences complementary to antecedent mobile elements and target invading nucleic acids. CRISPR clusters are transcribed and processed into CRISPR RNA (crRNA). Cas3 and Cascade participate in CRISPR interference, the third stage of CRISPR immunity (Potential). Absolutely required for crRNA production or stability. The Csy ribonucleoprotein complex binds target ssDNA with high affinity but target dsDNA with much lower affinity.</text>
</comment>
<comment type="subunit">
    <text evidence="3 4">Interacts directly with Csy1; part of the Csy ribonucleoprotein complex with a probable stoichiometry of Csy1(1),Csy2(1),Csy3(6),Cas6/Csy4(1)-crRNA(1). A Csy3(6),Cas6/Csy4(1)-crRNA(1) subcomplex is also formed.</text>
</comment>
<comment type="interaction">
    <interactant intactId="EBI-15924831">
        <id>Q02MM0</id>
    </interactant>
    <interactant intactId="EBI-15924821">
        <id>Q02ML9</id>
        <label>csy1</label>
    </interactant>
    <organismsDiffer>false</organismsDiffer>
    <experiments>6</experiments>
</comment>
<comment type="mass spectrometry"/>
<comment type="disruption phenotype">
    <text evidence="1 2">Mutants lose phage DMS3 infection-dependent inhibition of biofilm formation while there is normal biofilm formation in the absence of phage infection. Loss of production of crRNA in the presence or absence of phage. Disruption of the entire Y.pestis-subtype CRISPR region disrupts crRNA production but does not alter phage resistance (possibly OLNs PA14_33350 to PA14_33310, and the flanking CRISPR loci), indicating this CRISPR is not involved in phage resistance.</text>
</comment>
<comment type="miscellaneous">
    <text>In this bacteria, Y.pestis-subtype CRISPRs do not confer resistance to phage DMS3 or MP22, but instead are required for DMS3 infection-dependent inhibition of biofilm formation and possibly motility.</text>
</comment>
<comment type="similarity">
    <text evidence="5">Belongs to the CRISPR-associated Csy2 family.</text>
</comment>
<proteinExistence type="evidence at protein level"/>
<organism>
    <name type="scientific">Pseudomonas aeruginosa (strain UCBPP-PA14)</name>
    <dbReference type="NCBI Taxonomy" id="208963"/>
    <lineage>
        <taxon>Bacteria</taxon>
        <taxon>Pseudomonadati</taxon>
        <taxon>Pseudomonadota</taxon>
        <taxon>Gammaproteobacteria</taxon>
        <taxon>Pseudomonadales</taxon>
        <taxon>Pseudomonadaceae</taxon>
        <taxon>Pseudomonas</taxon>
    </lineage>
</organism>